<sequence>MPDSPTESYGPDREYHVFISLFLCRNTSGKFLSVGPATPGWSINNTVVKENYYTEKLSCIITFNTLNFLTATISVVGTAGNATVLRLLGFHMHRYAFSVYVFNLAGADFLYLCTQTVYSLECVLQFDNSYFYFLLTILMFAYLAALCMIPAISTERCLSVTWPIWYHCQRPRHTSATVCALFWAFSLLLRLLLGQGCGFLFGKYDYYFCRYCSFITTAFLIVLFVVPFVSSLAMLTKIICGSHRIPVTRFYVTIAVTVLVFTFFGLPVGIISLLLPRIVVFRGVFYIYKIVTFLYSVNCCANPIIYFLIGSIRHHRLQRQSLKLLLQRAMQDTPEEEGGVKGPSQKSNELEIV</sequence>
<evidence type="ECO:0000250" key="1"/>
<evidence type="ECO:0000255" key="2"/>
<evidence type="ECO:0000255" key="3">
    <source>
        <dbReference type="PROSITE-ProRule" id="PRU00521"/>
    </source>
</evidence>
<evidence type="ECO:0000256" key="4">
    <source>
        <dbReference type="SAM" id="MobiDB-lite"/>
    </source>
</evidence>
<evidence type="ECO:0000269" key="5">
    <source>
    </source>
</evidence>
<evidence type="ECO:0000305" key="6"/>
<accession>Q7TN44</accession>
<reference key="1">
    <citation type="journal article" date="2003" name="Proc. Natl. Acad. Sci. U.S.A.">
        <title>Atypical expansion in mice of the sensory neuron-specific Mrg G protein-coupled receptor family.</title>
        <authorList>
            <person name="Zylka M.J."/>
            <person name="Dong X."/>
            <person name="Southwell A.L."/>
            <person name="Anderson D.J."/>
        </authorList>
    </citation>
    <scope>NUCLEOTIDE SEQUENCE [GENOMIC DNA]</scope>
    <scope>TISSUE SPECIFICITY</scope>
    <source>
        <strain>Sprague-Dawley</strain>
    </source>
</reference>
<proteinExistence type="evidence at transcript level"/>
<gene>
    <name type="primary">Mrgprb5</name>
    <name type="synonym">Mrgb5</name>
</gene>
<feature type="chain" id="PRO_0000305302" description="Mas-related G-protein coupled receptor member B5">
    <location>
        <begin position="1"/>
        <end position="353"/>
    </location>
</feature>
<feature type="topological domain" description="Extracellular" evidence="2">
    <location>
        <begin position="1"/>
        <end position="67"/>
    </location>
</feature>
<feature type="transmembrane region" description="Helical; Name=1" evidence="2">
    <location>
        <begin position="68"/>
        <end position="90"/>
    </location>
</feature>
<feature type="topological domain" description="Cytoplasmic" evidence="2">
    <location>
        <begin position="91"/>
        <end position="96"/>
    </location>
</feature>
<feature type="transmembrane region" description="Helical; Name=2" evidence="2">
    <location>
        <begin position="97"/>
        <end position="117"/>
    </location>
</feature>
<feature type="topological domain" description="Extracellular" evidence="2">
    <location>
        <begin position="118"/>
        <end position="131"/>
    </location>
</feature>
<feature type="transmembrane region" description="Helical; Name=3" evidence="2">
    <location>
        <begin position="132"/>
        <end position="152"/>
    </location>
</feature>
<feature type="topological domain" description="Cytoplasmic" evidence="2">
    <location>
        <begin position="153"/>
        <end position="180"/>
    </location>
</feature>
<feature type="transmembrane region" description="Helical; Name=4" evidence="2">
    <location>
        <begin position="181"/>
        <end position="201"/>
    </location>
</feature>
<feature type="topological domain" description="Extracellular" evidence="2">
    <location>
        <begin position="202"/>
        <end position="213"/>
    </location>
</feature>
<feature type="transmembrane region" description="Helical; Name=5" evidence="2">
    <location>
        <begin position="214"/>
        <end position="234"/>
    </location>
</feature>
<feature type="topological domain" description="Cytoplasmic" evidence="2">
    <location>
        <begin position="235"/>
        <end position="253"/>
    </location>
</feature>
<feature type="transmembrane region" description="Helical; Name=6" evidence="2">
    <location>
        <begin position="254"/>
        <end position="274"/>
    </location>
</feature>
<feature type="topological domain" description="Extracellular" evidence="2">
    <location>
        <begin position="275"/>
        <end position="289"/>
    </location>
</feature>
<feature type="transmembrane region" description="Helical; Name=7" evidence="2">
    <location>
        <begin position="290"/>
        <end position="310"/>
    </location>
</feature>
<feature type="topological domain" description="Cytoplasmic" evidence="2">
    <location>
        <begin position="311"/>
        <end position="353"/>
    </location>
</feature>
<feature type="region of interest" description="Disordered" evidence="4">
    <location>
        <begin position="333"/>
        <end position="353"/>
    </location>
</feature>
<feature type="glycosylation site" description="N-linked (GlcNAc...) asparagine" evidence="2">
    <location>
        <position position="26"/>
    </location>
</feature>
<feature type="glycosylation site" description="N-linked (GlcNAc...) asparagine" evidence="2">
    <location>
        <position position="44"/>
    </location>
</feature>
<keyword id="KW-0297">G-protein coupled receptor</keyword>
<keyword id="KW-0325">Glycoprotein</keyword>
<keyword id="KW-0472">Membrane</keyword>
<keyword id="KW-0675">Receptor</keyword>
<keyword id="KW-1185">Reference proteome</keyword>
<keyword id="KW-0807">Transducer</keyword>
<keyword id="KW-0812">Transmembrane</keyword>
<keyword id="KW-1133">Transmembrane helix</keyword>
<name>MRGB5_RAT</name>
<dbReference type="EMBL" id="AF518243">
    <property type="protein sequence ID" value="AAQ08315.1"/>
    <property type="molecule type" value="Genomic_DNA"/>
</dbReference>
<dbReference type="RefSeq" id="NP_001002284.1">
    <property type="nucleotide sequence ID" value="NM_001002284.1"/>
</dbReference>
<dbReference type="SMR" id="Q7TN44"/>
<dbReference type="FunCoup" id="Q7TN44">
    <property type="interactions" value="32"/>
</dbReference>
<dbReference type="STRING" id="10116.ENSRNOP00000031272"/>
<dbReference type="GlyCosmos" id="Q7TN44">
    <property type="glycosylation" value="2 sites, No reported glycans"/>
</dbReference>
<dbReference type="GlyGen" id="Q7TN44">
    <property type="glycosylation" value="4 sites"/>
</dbReference>
<dbReference type="PaxDb" id="10116-ENSRNOP00000031272"/>
<dbReference type="GeneID" id="404644"/>
<dbReference type="KEGG" id="rno:404644"/>
<dbReference type="UCSC" id="RGD:738052">
    <property type="organism name" value="rat"/>
</dbReference>
<dbReference type="AGR" id="RGD:738052"/>
<dbReference type="CTD" id="404239"/>
<dbReference type="RGD" id="738052">
    <property type="gene designation" value="Mrgprb5"/>
</dbReference>
<dbReference type="eggNOG" id="ENOG502RTWA">
    <property type="taxonomic scope" value="Eukaryota"/>
</dbReference>
<dbReference type="InParanoid" id="Q7TN44"/>
<dbReference type="OrthoDB" id="9631784at2759"/>
<dbReference type="PhylomeDB" id="Q7TN44"/>
<dbReference type="PRO" id="PR:Q7TN44"/>
<dbReference type="Proteomes" id="UP000002494">
    <property type="component" value="Unplaced"/>
</dbReference>
<dbReference type="GO" id="GO:0005886">
    <property type="term" value="C:plasma membrane"/>
    <property type="evidence" value="ECO:0000318"/>
    <property type="project" value="GO_Central"/>
</dbReference>
<dbReference type="GO" id="GO:0004930">
    <property type="term" value="F:G protein-coupled receptor activity"/>
    <property type="evidence" value="ECO:0000318"/>
    <property type="project" value="GO_Central"/>
</dbReference>
<dbReference type="GO" id="GO:0007186">
    <property type="term" value="P:G protein-coupled receptor signaling pathway"/>
    <property type="evidence" value="ECO:0000318"/>
    <property type="project" value="GO_Central"/>
</dbReference>
<dbReference type="CDD" id="cd15107">
    <property type="entry name" value="7tmA_MrgprB"/>
    <property type="match status" value="1"/>
</dbReference>
<dbReference type="FunFam" id="1.20.1070.10:FF:000140">
    <property type="entry name" value="Mas-related G-protein coupled receptor member X2"/>
    <property type="match status" value="1"/>
</dbReference>
<dbReference type="Gene3D" id="1.20.1070.10">
    <property type="entry name" value="Rhodopsin 7-helix transmembrane proteins"/>
    <property type="match status" value="1"/>
</dbReference>
<dbReference type="InterPro" id="IPR000276">
    <property type="entry name" value="GPCR_Rhodpsn"/>
</dbReference>
<dbReference type="InterPro" id="IPR017452">
    <property type="entry name" value="GPCR_Rhodpsn_7TM"/>
</dbReference>
<dbReference type="InterPro" id="IPR026234">
    <property type="entry name" value="MRGPCRFAMILY"/>
</dbReference>
<dbReference type="PANTHER" id="PTHR11334">
    <property type="entry name" value="MAS-RELATED G-PROTEIN COUPLED RECEPTOR"/>
    <property type="match status" value="1"/>
</dbReference>
<dbReference type="PANTHER" id="PTHR11334:SF36">
    <property type="entry name" value="MAS-RELATED G-PROTEIN COUPLED RECEPTOR MEMBER B4-RELATED"/>
    <property type="match status" value="1"/>
</dbReference>
<dbReference type="Pfam" id="PF00001">
    <property type="entry name" value="7tm_1"/>
    <property type="match status" value="1"/>
</dbReference>
<dbReference type="PRINTS" id="PR00237">
    <property type="entry name" value="GPCRRHODOPSN"/>
</dbReference>
<dbReference type="PRINTS" id="PR02108">
    <property type="entry name" value="MRGPCRFAMILY"/>
</dbReference>
<dbReference type="SUPFAM" id="SSF81321">
    <property type="entry name" value="Family A G protein-coupled receptor-like"/>
    <property type="match status" value="1"/>
</dbReference>
<dbReference type="PROSITE" id="PS00237">
    <property type="entry name" value="G_PROTEIN_RECEP_F1_1"/>
    <property type="match status" value="1"/>
</dbReference>
<dbReference type="PROSITE" id="PS50262">
    <property type="entry name" value="G_PROTEIN_RECEP_F1_2"/>
    <property type="match status" value="1"/>
</dbReference>
<protein>
    <recommendedName>
        <fullName>Mas-related G-protein coupled receptor member B5</fullName>
    </recommendedName>
</protein>
<organism>
    <name type="scientific">Rattus norvegicus</name>
    <name type="common">Rat</name>
    <dbReference type="NCBI Taxonomy" id="10116"/>
    <lineage>
        <taxon>Eukaryota</taxon>
        <taxon>Metazoa</taxon>
        <taxon>Chordata</taxon>
        <taxon>Craniata</taxon>
        <taxon>Vertebrata</taxon>
        <taxon>Euteleostomi</taxon>
        <taxon>Mammalia</taxon>
        <taxon>Eutheria</taxon>
        <taxon>Euarchontoglires</taxon>
        <taxon>Glires</taxon>
        <taxon>Rodentia</taxon>
        <taxon>Myomorpha</taxon>
        <taxon>Muroidea</taxon>
        <taxon>Muridae</taxon>
        <taxon>Murinae</taxon>
        <taxon>Rattus</taxon>
    </lineage>
</organism>
<comment type="function">
    <text evidence="1">Orphan receptor. Probably involved in the function of nociceptive neurons. May regulate nociceptor function and/or development, including the sensation or modulation of pain (By similarity).</text>
</comment>
<comment type="subcellular location">
    <subcellularLocation>
        <location evidence="6">Membrane</location>
        <topology evidence="6">Multi-pass membrane protein</topology>
    </subcellularLocation>
</comment>
<comment type="tissue specificity">
    <text evidence="5">Expressed strongly in newborn dorsal root ganglia, adult dorsal root ganglia and trigeminal ganlia.</text>
</comment>
<comment type="similarity">
    <text evidence="3">Belongs to the G-protein coupled receptor 1 family. Mas subfamily.</text>
</comment>